<proteinExistence type="evidence at transcript level"/>
<reference key="1">
    <citation type="journal article" date="1994" name="Plant Mol. Biol.">
        <title>Two amidophosphoribosyltransferase genes of Arabidopsis thaliana expressed in different organs.</title>
        <authorList>
            <person name="Ito T."/>
            <person name="Shiraishi H."/>
            <person name="Okada K."/>
            <person name="Shimura Y."/>
        </authorList>
    </citation>
    <scope>NUCLEOTIDE SEQUENCE [MRNA]</scope>
    <scope>TISSUE SPECIFICITY</scope>
    <source>
        <strain>cv. Landsberg erecta</strain>
        <tissue>Flower</tissue>
        <tissue>Root</tissue>
    </source>
</reference>
<reference key="2">
    <citation type="journal article" date="1999" name="Nature">
        <title>Sequence and analysis of chromosome 2 of the plant Arabidopsis thaliana.</title>
        <authorList>
            <person name="Lin X."/>
            <person name="Kaul S."/>
            <person name="Rounsley S.D."/>
            <person name="Shea T.P."/>
            <person name="Benito M.-I."/>
            <person name="Town C.D."/>
            <person name="Fujii C.Y."/>
            <person name="Mason T.M."/>
            <person name="Bowman C.L."/>
            <person name="Barnstead M.E."/>
            <person name="Feldblyum T.V."/>
            <person name="Buell C.R."/>
            <person name="Ketchum K.A."/>
            <person name="Lee J.J."/>
            <person name="Ronning C.M."/>
            <person name="Koo H.L."/>
            <person name="Moffat K.S."/>
            <person name="Cronin L.A."/>
            <person name="Shen M."/>
            <person name="Pai G."/>
            <person name="Van Aken S."/>
            <person name="Umayam L."/>
            <person name="Tallon L.J."/>
            <person name="Gill J.E."/>
            <person name="Adams M.D."/>
            <person name="Carrera A.J."/>
            <person name="Creasy T.H."/>
            <person name="Goodman H.M."/>
            <person name="Somerville C.R."/>
            <person name="Copenhaver G.P."/>
            <person name="Preuss D."/>
            <person name="Nierman W.C."/>
            <person name="White O."/>
            <person name="Eisen J.A."/>
            <person name="Salzberg S.L."/>
            <person name="Fraser C.M."/>
            <person name="Venter J.C."/>
        </authorList>
    </citation>
    <scope>NUCLEOTIDE SEQUENCE [LARGE SCALE GENOMIC DNA]</scope>
    <source>
        <strain>cv. Columbia</strain>
    </source>
</reference>
<reference key="3">
    <citation type="journal article" date="2017" name="Plant J.">
        <title>Araport11: a complete reannotation of the Arabidopsis thaliana reference genome.</title>
        <authorList>
            <person name="Cheng C.Y."/>
            <person name="Krishnakumar V."/>
            <person name="Chan A.P."/>
            <person name="Thibaud-Nissen F."/>
            <person name="Schobel S."/>
            <person name="Town C.D."/>
        </authorList>
    </citation>
    <scope>GENOME REANNOTATION</scope>
    <source>
        <strain>cv. Columbia</strain>
    </source>
</reference>
<reference key="4">
    <citation type="journal article" date="2004" name="Plant Physiol.">
        <title>Characterization of Arabidopsis glutamine phosphoribosyl pyrophosphate amidotransferase-deficient mutants.</title>
        <authorList>
            <person name="Hung W.-F."/>
            <person name="Chen L.-J."/>
            <person name="Boldt R."/>
            <person name="Sun C.-W."/>
            <person name="Li H.-M."/>
        </authorList>
    </citation>
    <scope>FUNCTION</scope>
    <scope>SUBCELLULAR LOCATION</scope>
    <scope>TISSUE SPECIFICITY</scope>
    <scope>GENE FAMILY</scope>
    <scope>NOMENCLATURE</scope>
</reference>
<accession>Q9SI61</accession>
<accession>Q38999</accession>
<protein>
    <recommendedName>
        <fullName>Amidophosphoribosyltransferase 1, chloroplastic</fullName>
        <shortName>AtATase1</shortName>
        <shortName>PRPP1</shortName>
        <ecNumber>2.4.2.14</ecNumber>
    </recommendedName>
    <alternativeName>
        <fullName>Glutamine phosphoribosylpyrophosphate amidotransferase 1</fullName>
        <shortName>AtGPRAT1</shortName>
    </alternativeName>
</protein>
<keyword id="KW-0150">Chloroplast</keyword>
<keyword id="KW-0315">Glutamine amidotransferase</keyword>
<keyword id="KW-0328">Glycosyltransferase</keyword>
<keyword id="KW-0408">Iron</keyword>
<keyword id="KW-0411">Iron-sulfur</keyword>
<keyword id="KW-0460">Magnesium</keyword>
<keyword id="KW-0479">Metal-binding</keyword>
<keyword id="KW-0934">Plastid</keyword>
<keyword id="KW-0658">Purine biosynthesis</keyword>
<keyword id="KW-1185">Reference proteome</keyword>
<keyword id="KW-0808">Transferase</keyword>
<keyword id="KW-0809">Transit peptide</keyword>
<feature type="transit peptide" description="Chloroplast" evidence="2">
    <location>
        <begin position="1"/>
        <end position="58"/>
    </location>
</feature>
<feature type="chain" id="PRO_0000420281" description="Amidophosphoribosyltransferase 1, chloroplastic">
    <location>
        <begin position="59"/>
        <end position="566"/>
    </location>
</feature>
<feature type="domain" description="Glutamine amidotransferase type-2" evidence="3">
    <location>
        <begin position="91"/>
        <end position="311"/>
    </location>
</feature>
<feature type="region of interest" description="Disordered" evidence="4">
    <location>
        <begin position="1"/>
        <end position="28"/>
    </location>
</feature>
<feature type="region of interest" description="Disordered" evidence="4">
    <location>
        <begin position="58"/>
        <end position="87"/>
    </location>
</feature>
<feature type="compositionally biased region" description="Low complexity" evidence="4">
    <location>
        <begin position="1"/>
        <end position="13"/>
    </location>
</feature>
<feature type="compositionally biased region" description="Polar residues" evidence="4">
    <location>
        <begin position="15"/>
        <end position="25"/>
    </location>
</feature>
<feature type="compositionally biased region" description="Low complexity" evidence="4">
    <location>
        <begin position="59"/>
        <end position="68"/>
    </location>
</feature>
<feature type="compositionally biased region" description="Basic and acidic residues" evidence="4">
    <location>
        <begin position="70"/>
        <end position="87"/>
    </location>
</feature>
<feature type="active site" description="Nucleophile" evidence="3">
    <location>
        <position position="91"/>
    </location>
</feature>
<feature type="binding site" evidence="1">
    <location>
        <position position="327"/>
    </location>
    <ligand>
        <name>[4Fe-4S] cluster</name>
        <dbReference type="ChEBI" id="CHEBI:49883"/>
    </ligand>
</feature>
<feature type="binding site" evidence="1">
    <location>
        <position position="473"/>
    </location>
    <ligand>
        <name>[4Fe-4S] cluster</name>
        <dbReference type="ChEBI" id="CHEBI:49883"/>
    </ligand>
</feature>
<feature type="binding site" evidence="1">
    <location>
        <position position="524"/>
    </location>
    <ligand>
        <name>[4Fe-4S] cluster</name>
        <dbReference type="ChEBI" id="CHEBI:49883"/>
    </ligand>
</feature>
<feature type="binding site" evidence="1">
    <location>
        <position position="527"/>
    </location>
    <ligand>
        <name>[4Fe-4S] cluster</name>
        <dbReference type="ChEBI" id="CHEBI:49883"/>
    </ligand>
</feature>
<feature type="sequence conflict" description="In Ref. 1; BAA06023." evidence="7" ref="1">
    <original>T</original>
    <variation>A</variation>
    <location>
        <position position="74"/>
    </location>
</feature>
<feature type="sequence conflict" description="In Ref. 1; BAA06023." evidence="7" ref="1">
    <original>C</original>
    <variation>F</variation>
    <location>
        <position position="106"/>
    </location>
</feature>
<feature type="sequence conflict" description="In Ref. 1; BAA06023." evidence="7" ref="1">
    <original>G</original>
    <variation>A</variation>
    <location>
        <position position="160"/>
    </location>
</feature>
<comment type="function">
    <text evidence="5">Catalyzes the first committed step of 'de novo' purine biosynthesis from glutamine. Involved in plastid biogenesis and cell division.</text>
</comment>
<comment type="catalytic activity">
    <reaction>
        <text>5-phospho-beta-D-ribosylamine + L-glutamate + diphosphate = 5-phospho-alpha-D-ribose 1-diphosphate + L-glutamine + H2O</text>
        <dbReference type="Rhea" id="RHEA:14905"/>
        <dbReference type="ChEBI" id="CHEBI:15377"/>
        <dbReference type="ChEBI" id="CHEBI:29985"/>
        <dbReference type="ChEBI" id="CHEBI:33019"/>
        <dbReference type="ChEBI" id="CHEBI:58017"/>
        <dbReference type="ChEBI" id="CHEBI:58359"/>
        <dbReference type="ChEBI" id="CHEBI:58681"/>
        <dbReference type="EC" id="2.4.2.14"/>
    </reaction>
</comment>
<comment type="cofactor">
    <cofactor evidence="1">
        <name>[4Fe-4S] cluster</name>
        <dbReference type="ChEBI" id="CHEBI:49883"/>
    </cofactor>
    <text evidence="1">Binds 1 [4Fe-4S] cluster per subunit.</text>
</comment>
<comment type="cofactor">
    <cofactor evidence="1">
        <name>Mg(2+)</name>
        <dbReference type="ChEBI" id="CHEBI:18420"/>
    </cofactor>
    <text evidence="1">Binds 1 Mg(2+) ion per subunit.</text>
</comment>
<comment type="pathway">
    <text>Purine metabolism; IMP biosynthesis via de novo pathway; N(1)-(5-phospho-D-ribosyl)glycinamide from 5-phospho-alpha-D-ribose 1-diphosphate: step 1/2.</text>
</comment>
<comment type="subcellular location">
    <subcellularLocation>
        <location evidence="5">Plastid</location>
        <location evidence="5">Chloroplast stroma</location>
    </subcellularLocation>
</comment>
<comment type="tissue specificity">
    <text evidence="5 6">Expressed in flowers and roots. Also present in leaves, and, to a lower extent, in cotyledons.</text>
</comment>
<comment type="similarity">
    <text evidence="7">In the C-terminal section; belongs to the purine/pyrimidine phosphoribosyltransferase family.</text>
</comment>
<comment type="sequence caution" evidence="7">
    <conflict type="frameshift">
        <sequence resource="EMBL-CDS" id="BAA06023"/>
    </conflict>
</comment>
<organism>
    <name type="scientific">Arabidopsis thaliana</name>
    <name type="common">Mouse-ear cress</name>
    <dbReference type="NCBI Taxonomy" id="3702"/>
    <lineage>
        <taxon>Eukaryota</taxon>
        <taxon>Viridiplantae</taxon>
        <taxon>Streptophyta</taxon>
        <taxon>Embryophyta</taxon>
        <taxon>Tracheophyta</taxon>
        <taxon>Spermatophyta</taxon>
        <taxon>Magnoliopsida</taxon>
        <taxon>eudicotyledons</taxon>
        <taxon>Gunneridae</taxon>
        <taxon>Pentapetalae</taxon>
        <taxon>rosids</taxon>
        <taxon>malvids</taxon>
        <taxon>Brassicales</taxon>
        <taxon>Brassicaceae</taxon>
        <taxon>Camelineae</taxon>
        <taxon>Arabidopsis</taxon>
    </lineage>
</organism>
<dbReference type="EC" id="2.4.2.14"/>
<dbReference type="EMBL" id="D28868">
    <property type="protein sequence ID" value="BAA06023.1"/>
    <property type="status" value="ALT_FRAME"/>
    <property type="molecule type" value="mRNA"/>
</dbReference>
<dbReference type="EMBL" id="AC007195">
    <property type="protein sequence ID" value="AAD26498.1"/>
    <property type="molecule type" value="Genomic_DNA"/>
</dbReference>
<dbReference type="EMBL" id="CP002685">
    <property type="protein sequence ID" value="AEC06510.1"/>
    <property type="molecule type" value="Genomic_DNA"/>
</dbReference>
<dbReference type="PIR" id="E84541">
    <property type="entry name" value="E84541"/>
</dbReference>
<dbReference type="PIR" id="S52622">
    <property type="entry name" value="S52622"/>
</dbReference>
<dbReference type="RefSeq" id="NP_179247.1">
    <property type="nucleotide sequence ID" value="NM_127208.2"/>
</dbReference>
<dbReference type="SMR" id="Q9SI61"/>
<dbReference type="BioGRID" id="1514">
    <property type="interactions" value="2"/>
</dbReference>
<dbReference type="FunCoup" id="Q9SI61">
    <property type="interactions" value="2239"/>
</dbReference>
<dbReference type="IntAct" id="Q9SI61">
    <property type="interactions" value="2"/>
</dbReference>
<dbReference type="STRING" id="3702.Q9SI61"/>
<dbReference type="MEROPS" id="C44.A01"/>
<dbReference type="iPTMnet" id="Q9SI61"/>
<dbReference type="SwissPalm" id="Q9SI61"/>
<dbReference type="PaxDb" id="3702-AT2G16570.1"/>
<dbReference type="ProteomicsDB" id="246498"/>
<dbReference type="EnsemblPlants" id="AT2G16570.1">
    <property type="protein sequence ID" value="AT2G16570.1"/>
    <property type="gene ID" value="AT2G16570"/>
</dbReference>
<dbReference type="GeneID" id="816156"/>
<dbReference type="Gramene" id="AT2G16570.1">
    <property type="protein sequence ID" value="AT2G16570.1"/>
    <property type="gene ID" value="AT2G16570"/>
</dbReference>
<dbReference type="KEGG" id="ath:AT2G16570"/>
<dbReference type="Araport" id="AT2G16570"/>
<dbReference type="TAIR" id="AT2G16570">
    <property type="gene designation" value="ASE1"/>
</dbReference>
<dbReference type="eggNOG" id="KOG0572">
    <property type="taxonomic scope" value="Eukaryota"/>
</dbReference>
<dbReference type="HOGENOM" id="CLU_022389_3_3_1"/>
<dbReference type="InParanoid" id="Q9SI61"/>
<dbReference type="OMA" id="QPKGDHV"/>
<dbReference type="PhylomeDB" id="Q9SI61"/>
<dbReference type="BioCyc" id="ARA:AT2G16570-MONOMER"/>
<dbReference type="BRENDA" id="2.4.2.14">
    <property type="organism ID" value="399"/>
</dbReference>
<dbReference type="UniPathway" id="UPA00074">
    <property type="reaction ID" value="UER00124"/>
</dbReference>
<dbReference type="PRO" id="PR:Q9SI61"/>
<dbReference type="Proteomes" id="UP000006548">
    <property type="component" value="Chromosome 2"/>
</dbReference>
<dbReference type="ExpressionAtlas" id="Q9SI61">
    <property type="expression patterns" value="baseline and differential"/>
</dbReference>
<dbReference type="GO" id="GO:0009570">
    <property type="term" value="C:chloroplast stroma"/>
    <property type="evidence" value="ECO:0000314"/>
    <property type="project" value="TAIR"/>
</dbReference>
<dbReference type="GO" id="GO:0009505">
    <property type="term" value="C:plant-type cell wall"/>
    <property type="evidence" value="ECO:0007005"/>
    <property type="project" value="TAIR"/>
</dbReference>
<dbReference type="GO" id="GO:0009536">
    <property type="term" value="C:plastid"/>
    <property type="evidence" value="ECO:0007005"/>
    <property type="project" value="TAIR"/>
</dbReference>
<dbReference type="GO" id="GO:0009532">
    <property type="term" value="C:plastid stroma"/>
    <property type="evidence" value="ECO:0000314"/>
    <property type="project" value="UniProtKB"/>
</dbReference>
<dbReference type="GO" id="GO:0004044">
    <property type="term" value="F:amidophosphoribosyltransferase activity"/>
    <property type="evidence" value="ECO:0000250"/>
    <property type="project" value="TAIR"/>
</dbReference>
<dbReference type="GO" id="GO:0051536">
    <property type="term" value="F:iron-sulfur cluster binding"/>
    <property type="evidence" value="ECO:0007669"/>
    <property type="project" value="UniProtKB-KW"/>
</dbReference>
<dbReference type="GO" id="GO:0046872">
    <property type="term" value="F:metal ion binding"/>
    <property type="evidence" value="ECO:0007669"/>
    <property type="project" value="UniProtKB-KW"/>
</dbReference>
<dbReference type="GO" id="GO:0006189">
    <property type="term" value="P:'de novo' IMP biosynthetic process"/>
    <property type="evidence" value="ECO:0007669"/>
    <property type="project" value="UniProtKB-UniPathway"/>
</dbReference>
<dbReference type="GO" id="GO:0009113">
    <property type="term" value="P:purine nucleobase biosynthetic process"/>
    <property type="evidence" value="ECO:0000250"/>
    <property type="project" value="TAIR"/>
</dbReference>
<dbReference type="CDD" id="cd00715">
    <property type="entry name" value="GPATase_N"/>
    <property type="match status" value="1"/>
</dbReference>
<dbReference type="CDD" id="cd06223">
    <property type="entry name" value="PRTases_typeI"/>
    <property type="match status" value="1"/>
</dbReference>
<dbReference type="Gene3D" id="3.40.50.2020">
    <property type="match status" value="1"/>
</dbReference>
<dbReference type="Gene3D" id="3.60.20.10">
    <property type="entry name" value="Glutamine Phosphoribosylpyrophosphate, subunit 1, domain 1"/>
    <property type="match status" value="1"/>
</dbReference>
<dbReference type="HAMAP" id="MF_01931">
    <property type="entry name" value="PurF"/>
    <property type="match status" value="1"/>
</dbReference>
<dbReference type="InterPro" id="IPR017932">
    <property type="entry name" value="GATase_2_dom"/>
</dbReference>
<dbReference type="InterPro" id="IPR029055">
    <property type="entry name" value="Ntn_hydrolases_N"/>
</dbReference>
<dbReference type="InterPro" id="IPR000836">
    <property type="entry name" value="PRibTrfase_dom"/>
</dbReference>
<dbReference type="InterPro" id="IPR029057">
    <property type="entry name" value="PRTase-like"/>
</dbReference>
<dbReference type="InterPro" id="IPR005854">
    <property type="entry name" value="PurF"/>
</dbReference>
<dbReference type="InterPro" id="IPR035584">
    <property type="entry name" value="PurF_N"/>
</dbReference>
<dbReference type="NCBIfam" id="TIGR01134">
    <property type="entry name" value="purF"/>
    <property type="match status" value="1"/>
</dbReference>
<dbReference type="PANTHER" id="PTHR11907">
    <property type="entry name" value="AMIDOPHOSPHORIBOSYLTRANSFERASE"/>
    <property type="match status" value="1"/>
</dbReference>
<dbReference type="Pfam" id="PF13537">
    <property type="entry name" value="GATase_7"/>
    <property type="match status" value="1"/>
</dbReference>
<dbReference type="Pfam" id="PF00156">
    <property type="entry name" value="Pribosyltran"/>
    <property type="match status" value="1"/>
</dbReference>
<dbReference type="SUPFAM" id="SSF56235">
    <property type="entry name" value="N-terminal nucleophile aminohydrolases (Ntn hydrolases)"/>
    <property type="match status" value="1"/>
</dbReference>
<dbReference type="SUPFAM" id="SSF53271">
    <property type="entry name" value="PRTase-like"/>
    <property type="match status" value="1"/>
</dbReference>
<dbReference type="PROSITE" id="PS51278">
    <property type="entry name" value="GATASE_TYPE_2"/>
    <property type="match status" value="1"/>
</dbReference>
<dbReference type="PROSITE" id="PS00103">
    <property type="entry name" value="PUR_PYR_PR_TRANSFER"/>
    <property type="match status" value="1"/>
</dbReference>
<evidence type="ECO:0000250" key="1"/>
<evidence type="ECO:0000255" key="2"/>
<evidence type="ECO:0000255" key="3">
    <source>
        <dbReference type="PROSITE-ProRule" id="PRU00609"/>
    </source>
</evidence>
<evidence type="ECO:0000256" key="4">
    <source>
        <dbReference type="SAM" id="MobiDB-lite"/>
    </source>
</evidence>
<evidence type="ECO:0000269" key="5">
    <source>
    </source>
</evidence>
<evidence type="ECO:0000269" key="6">
    <source>
    </source>
</evidence>
<evidence type="ECO:0000305" key="7"/>
<name>ASE1_ARATH</name>
<gene>
    <name type="primary">ASE1</name>
    <name type="synonym">GPRAT1</name>
    <name type="ordered locus">At2g16570</name>
    <name type="ORF">F1P15</name>
</gene>
<sequence>MAATTSFSSSLSLITKPNNSSYTNQPLPLFPKPFLKPPHLSLLPSPLSSPPPSLIHGVSSYFSSPSPSEDNSHTPFDYHNDEDDEKPREECGVVGIYGDPEASRLCYLALHALQHRGQEGAGIVTVSPEKVLQTITGVGLVSEVFNESKLDQLPGEFAIGHVRYSTAGASMLKNVQPFVAGYRFGSIGVAHNGNLVNYKTLRAMLEENGSIFNTSSDTEVVLHLIAISKARPFFMRIIDACEKLQGAYSMVFVTEDKLVAVRDPYGFRPLVMGRRSNGAVVFASETCALDLIEATYEREVYPGEVLVVDKDGVKSQCLMPKFEPKQCIFEHIYFSLPNSIVFGRSVYESRHVFGEILATESPVECDVVIAVPDSGVVAALGYAAKSGVPFQQGLIRSHYVGRTFIEPSQKIRDFGVKLKLSPVRGVLEGKRVVVVDDSIVRGTTSSKIVRLLREAGAKEVHMRIASPPIVASCYYGVDTPSSEELISNRLSVEEINEFIGSDSLAFLSFDTLKKHLGKDSKSFCYACFTGDYPVKPTEVKVKRGGGDFIDDGLVGSFENIEAGWVR</sequence>